<evidence type="ECO:0000250" key="1"/>
<evidence type="ECO:0000255" key="2">
    <source>
        <dbReference type="PROSITE-ProRule" id="PRU00169"/>
    </source>
</evidence>
<evidence type="ECO:0000255" key="3">
    <source>
        <dbReference type="PROSITE-ProRule" id="PRU01091"/>
    </source>
</evidence>
<evidence type="ECO:0000305" key="4"/>
<sequence length="232" mass="26041">MSVRILVVDDDRAVRESLRRSLSFNGYTVELAHDGVEALEMIASDRPDALVLDVMMPRLDGLEVCRQLRSTGDDLPILVLTARDSVSERVAGLDAGADDYLPKPFALEELLARMRALLRRTKLEDDEAADSVAMTFSDLSLDPVTREVTRGARRISLTRTEFALLEMLIANPRRVLTRSRILEEVWGFDFPTSGNALEVYVGYLRRKTEAEGEPRLIHTVRGVGYVLRETPP</sequence>
<keyword id="KW-0963">Cytoplasm</keyword>
<keyword id="KW-0238">DNA-binding</keyword>
<keyword id="KW-0597">Phosphoprotein</keyword>
<keyword id="KW-0346">Stress response</keyword>
<keyword id="KW-0804">Transcription</keyword>
<keyword id="KW-0805">Transcription regulation</keyword>
<keyword id="KW-0902">Two-component regulatory system</keyword>
<keyword id="KW-0843">Virulence</keyword>
<organism>
    <name type="scientific">Mycobacterium ulcerans (strain Agy99)</name>
    <dbReference type="NCBI Taxonomy" id="362242"/>
    <lineage>
        <taxon>Bacteria</taxon>
        <taxon>Bacillati</taxon>
        <taxon>Actinomycetota</taxon>
        <taxon>Actinomycetes</taxon>
        <taxon>Mycobacteriales</taxon>
        <taxon>Mycobacteriaceae</taxon>
        <taxon>Mycobacterium</taxon>
        <taxon>Mycobacterium ulcerans group</taxon>
    </lineage>
</organism>
<protein>
    <recommendedName>
        <fullName>Response regulator MprA</fullName>
    </recommendedName>
    <alternativeName>
        <fullName>Mycobacterial persistence regulator A</fullName>
    </alternativeName>
</protein>
<accession>A0PWB4</accession>
<gene>
    <name type="primary">mprA</name>
    <name type="ordered locus">MUL_4701</name>
</gene>
<proteinExistence type="inferred from homology"/>
<reference key="1">
    <citation type="journal article" date="2007" name="Genome Res.">
        <title>Reductive evolution and niche adaptation inferred from the genome of Mycobacterium ulcerans, the causative agent of Buruli ulcer.</title>
        <authorList>
            <person name="Stinear T.P."/>
            <person name="Seemann T."/>
            <person name="Pidot S."/>
            <person name="Frigui W."/>
            <person name="Reysset G."/>
            <person name="Garnier T."/>
            <person name="Meurice G."/>
            <person name="Simon D."/>
            <person name="Bouchier C."/>
            <person name="Ma L."/>
            <person name="Tichit M."/>
            <person name="Porter J.L."/>
            <person name="Ryan J."/>
            <person name="Johnson P.D.R."/>
            <person name="Davies J.K."/>
            <person name="Jenkin G.A."/>
            <person name="Small P.L.C."/>
            <person name="Jones L.M."/>
            <person name="Tekaia F."/>
            <person name="Laval F."/>
            <person name="Daffe M."/>
            <person name="Parkhill J."/>
            <person name="Cole S.T."/>
        </authorList>
    </citation>
    <scope>NUCLEOTIDE SEQUENCE [LARGE SCALE GENOMIC DNA]</scope>
    <source>
        <strain>Agy99</strain>
    </source>
</reference>
<comment type="function">
    <text evidence="1">Member of the two-component regulatory system MprB/MprA which contributes to maintaining a balance among several systems involved in stress resistance and is required for establishment and maintenance of persistent infection in the host. Functions as a transcriptional regulator that recognizes a 19-bp nucleotide motif comprizing two loosely conserved 8-bp direct DNA-binding motif repeats separated by a 3-bp spacer region (By similarity).</text>
</comment>
<comment type="subcellular location">
    <subcellularLocation>
        <location evidence="4">Cytoplasm</location>
    </subcellularLocation>
</comment>
<comment type="PTM">
    <text evidence="1">Phosphorylated and dephosphorylated by MprB.</text>
</comment>
<name>MPRA_MYCUA</name>
<feature type="chain" id="PRO_0000308429" description="Response regulator MprA">
    <location>
        <begin position="1"/>
        <end position="232"/>
    </location>
</feature>
<feature type="domain" description="Response regulatory" evidence="2">
    <location>
        <begin position="4"/>
        <end position="118"/>
    </location>
</feature>
<feature type="DNA-binding region" description="OmpR/PhoB-type" evidence="3">
    <location>
        <begin position="131"/>
        <end position="229"/>
    </location>
</feature>
<feature type="modified residue" description="4-aspartylphosphate" evidence="2">
    <location>
        <position position="48"/>
    </location>
</feature>
<dbReference type="EMBL" id="CP000325">
    <property type="protein sequence ID" value="ABL06633.1"/>
    <property type="molecule type" value="Genomic_DNA"/>
</dbReference>
<dbReference type="SMR" id="A0PWB4"/>
<dbReference type="KEGG" id="mul:MUL_4701"/>
<dbReference type="eggNOG" id="COG0745">
    <property type="taxonomic scope" value="Bacteria"/>
</dbReference>
<dbReference type="HOGENOM" id="CLU_000445_30_1_11"/>
<dbReference type="Proteomes" id="UP000000765">
    <property type="component" value="Chromosome"/>
</dbReference>
<dbReference type="GO" id="GO:0005829">
    <property type="term" value="C:cytosol"/>
    <property type="evidence" value="ECO:0007669"/>
    <property type="project" value="TreeGrafter"/>
</dbReference>
<dbReference type="GO" id="GO:0032993">
    <property type="term" value="C:protein-DNA complex"/>
    <property type="evidence" value="ECO:0007669"/>
    <property type="project" value="TreeGrafter"/>
</dbReference>
<dbReference type="GO" id="GO:0000156">
    <property type="term" value="F:phosphorelay response regulator activity"/>
    <property type="evidence" value="ECO:0007669"/>
    <property type="project" value="TreeGrafter"/>
</dbReference>
<dbReference type="GO" id="GO:0000976">
    <property type="term" value="F:transcription cis-regulatory region binding"/>
    <property type="evidence" value="ECO:0007669"/>
    <property type="project" value="TreeGrafter"/>
</dbReference>
<dbReference type="GO" id="GO:0006355">
    <property type="term" value="P:regulation of DNA-templated transcription"/>
    <property type="evidence" value="ECO:0007669"/>
    <property type="project" value="InterPro"/>
</dbReference>
<dbReference type="CDD" id="cd17627">
    <property type="entry name" value="REC_OmpR_PrrA-like"/>
    <property type="match status" value="1"/>
</dbReference>
<dbReference type="CDD" id="cd00383">
    <property type="entry name" value="trans_reg_C"/>
    <property type="match status" value="1"/>
</dbReference>
<dbReference type="FunFam" id="3.40.50.2300:FF:000001">
    <property type="entry name" value="DNA-binding response regulator PhoB"/>
    <property type="match status" value="1"/>
</dbReference>
<dbReference type="FunFam" id="1.10.10.10:FF:000005">
    <property type="entry name" value="Two-component system response regulator"/>
    <property type="match status" value="1"/>
</dbReference>
<dbReference type="Gene3D" id="3.40.50.2300">
    <property type="match status" value="1"/>
</dbReference>
<dbReference type="Gene3D" id="6.10.250.690">
    <property type="match status" value="1"/>
</dbReference>
<dbReference type="Gene3D" id="1.10.10.10">
    <property type="entry name" value="Winged helix-like DNA-binding domain superfamily/Winged helix DNA-binding domain"/>
    <property type="match status" value="1"/>
</dbReference>
<dbReference type="InterPro" id="IPR011006">
    <property type="entry name" value="CheY-like_superfamily"/>
</dbReference>
<dbReference type="InterPro" id="IPR001867">
    <property type="entry name" value="OmpR/PhoB-type_DNA-bd"/>
</dbReference>
<dbReference type="InterPro" id="IPR001789">
    <property type="entry name" value="Sig_transdc_resp-reg_receiver"/>
</dbReference>
<dbReference type="InterPro" id="IPR039420">
    <property type="entry name" value="WalR-like"/>
</dbReference>
<dbReference type="InterPro" id="IPR036388">
    <property type="entry name" value="WH-like_DNA-bd_sf"/>
</dbReference>
<dbReference type="PANTHER" id="PTHR48111">
    <property type="entry name" value="REGULATOR OF RPOS"/>
    <property type="match status" value="1"/>
</dbReference>
<dbReference type="PANTHER" id="PTHR48111:SF22">
    <property type="entry name" value="REGULATOR OF RPOS"/>
    <property type="match status" value="1"/>
</dbReference>
<dbReference type="Pfam" id="PF00072">
    <property type="entry name" value="Response_reg"/>
    <property type="match status" value="1"/>
</dbReference>
<dbReference type="Pfam" id="PF00486">
    <property type="entry name" value="Trans_reg_C"/>
    <property type="match status" value="1"/>
</dbReference>
<dbReference type="SMART" id="SM00448">
    <property type="entry name" value="REC"/>
    <property type="match status" value="1"/>
</dbReference>
<dbReference type="SMART" id="SM00862">
    <property type="entry name" value="Trans_reg_C"/>
    <property type="match status" value="1"/>
</dbReference>
<dbReference type="SUPFAM" id="SSF52172">
    <property type="entry name" value="CheY-like"/>
    <property type="match status" value="1"/>
</dbReference>
<dbReference type="PROSITE" id="PS51755">
    <property type="entry name" value="OMPR_PHOB"/>
    <property type="match status" value="1"/>
</dbReference>
<dbReference type="PROSITE" id="PS50110">
    <property type="entry name" value="RESPONSE_REGULATORY"/>
    <property type="match status" value="1"/>
</dbReference>